<sequence length="312" mass="35561">MSFHQQFFTLNNGNKIPAIAIIGTGTRWYKNEETDATFSNSLVEQIVYALKLPGIIHIDAAEIYRTYPEVGKALSLTEKPRNAIFLTDKYSPQIKMSDSPADGLDLALKKMGTDYVDLYLLHSPFVSKEVNGLSLEEAWKDMEQLYKSGKAKNIGVSNFAVEDLQRILKVAEVKPQVNQIEFSPFLQNQTPGIYKFCQEHDILVEAYSPLGPLQKKTAQDDSQPFFEYVKELSEKYIKSEAQIILRWVTKRGVLPVTTSSKPQRISDAQNLFSFDLTAEEVDKITELGLEHEPLRLYWNKLYGKYNYAAQKV</sequence>
<dbReference type="EC" id="1.2.1.-"/>
<dbReference type="EMBL" id="Z74172">
    <property type="protein sequence ID" value="CAA98692.1"/>
    <property type="molecule type" value="Genomic_DNA"/>
</dbReference>
<dbReference type="EMBL" id="BK006938">
    <property type="protein sequence ID" value="DAA11736.1"/>
    <property type="molecule type" value="Genomic_DNA"/>
</dbReference>
<dbReference type="PIR" id="S67667">
    <property type="entry name" value="S67667"/>
</dbReference>
<dbReference type="RefSeq" id="NP_010159.1">
    <property type="nucleotide sequence ID" value="NM_001180183.1"/>
</dbReference>
<dbReference type="SMR" id="Q07551"/>
<dbReference type="BioGRID" id="31939">
    <property type="interactions" value="88"/>
</dbReference>
<dbReference type="DIP" id="DIP-6607N"/>
<dbReference type="FunCoup" id="Q07551">
    <property type="interactions" value="283"/>
</dbReference>
<dbReference type="IntAct" id="Q07551">
    <property type="interactions" value="3"/>
</dbReference>
<dbReference type="STRING" id="4932.YDL124W"/>
<dbReference type="iPTMnet" id="Q07551"/>
<dbReference type="PaxDb" id="4932-YDL124W"/>
<dbReference type="PeptideAtlas" id="Q07551"/>
<dbReference type="TopDownProteomics" id="Q07551"/>
<dbReference type="EnsemblFungi" id="YDL124W_mRNA">
    <property type="protein sequence ID" value="YDL124W"/>
    <property type="gene ID" value="YDL124W"/>
</dbReference>
<dbReference type="GeneID" id="851433"/>
<dbReference type="KEGG" id="sce:YDL124W"/>
<dbReference type="AGR" id="SGD:S000002282"/>
<dbReference type="SGD" id="S000002282">
    <property type="gene designation" value="YDL124W"/>
</dbReference>
<dbReference type="VEuPathDB" id="FungiDB:YDL124W"/>
<dbReference type="eggNOG" id="KOG1577">
    <property type="taxonomic scope" value="Eukaryota"/>
</dbReference>
<dbReference type="GeneTree" id="ENSGT00940000164916"/>
<dbReference type="HOGENOM" id="CLU_023205_0_3_1"/>
<dbReference type="InParanoid" id="Q07551"/>
<dbReference type="OMA" id="IGTGTRW"/>
<dbReference type="OrthoDB" id="416253at2759"/>
<dbReference type="BioCyc" id="YEAST:G3O-29523-MONOMER"/>
<dbReference type="Reactome" id="R-SCE-156590">
    <property type="pathway name" value="Glutathione conjugation"/>
</dbReference>
<dbReference type="Reactome" id="R-SCE-193144">
    <property type="pathway name" value="Estrogen biosynthesis"/>
</dbReference>
<dbReference type="Reactome" id="R-SCE-193368">
    <property type="pathway name" value="Synthesis of bile acids and bile salts via 7alpha-hydroxycholesterol"/>
</dbReference>
<dbReference type="Reactome" id="R-SCE-193775">
    <property type="pathway name" value="Synthesis of bile acids and bile salts via 24-hydroxycholesterol"/>
</dbReference>
<dbReference type="Reactome" id="R-SCE-193807">
    <property type="pathway name" value="Synthesis of bile acids and bile salts via 27-hydroxycholesterol"/>
</dbReference>
<dbReference type="Reactome" id="R-SCE-2162123">
    <property type="pathway name" value="Synthesis of Prostaglandins (PG) and Thromboxanes (TX)"/>
</dbReference>
<dbReference type="Reactome" id="R-SCE-5365859">
    <property type="pathway name" value="RA biosynthesis pathway"/>
</dbReference>
<dbReference type="Reactome" id="R-SCE-5661270">
    <property type="pathway name" value="Formation of xylulose-5-phosphate"/>
</dbReference>
<dbReference type="Reactome" id="R-SCE-9757110">
    <property type="pathway name" value="Prednisone ADME"/>
</dbReference>
<dbReference type="BioGRID-ORCS" id="851433">
    <property type="hits" value="0 hits in 10 CRISPR screens"/>
</dbReference>
<dbReference type="PRO" id="PR:Q07551"/>
<dbReference type="Proteomes" id="UP000002311">
    <property type="component" value="Chromosome IV"/>
</dbReference>
<dbReference type="RNAct" id="Q07551">
    <property type="molecule type" value="protein"/>
</dbReference>
<dbReference type="GO" id="GO:0005737">
    <property type="term" value="C:cytoplasm"/>
    <property type="evidence" value="ECO:0007005"/>
    <property type="project" value="SGD"/>
</dbReference>
<dbReference type="GO" id="GO:0005829">
    <property type="term" value="C:cytosol"/>
    <property type="evidence" value="ECO:0000318"/>
    <property type="project" value="GO_Central"/>
</dbReference>
<dbReference type="GO" id="GO:0005634">
    <property type="term" value="C:nucleus"/>
    <property type="evidence" value="ECO:0007005"/>
    <property type="project" value="SGD"/>
</dbReference>
<dbReference type="GO" id="GO:0005886">
    <property type="term" value="C:plasma membrane"/>
    <property type="evidence" value="ECO:0007005"/>
    <property type="project" value="SGD"/>
</dbReference>
<dbReference type="GO" id="GO:0004033">
    <property type="term" value="F:aldo-keto reductase (NADPH) activity"/>
    <property type="evidence" value="ECO:0000314"/>
    <property type="project" value="SGD"/>
</dbReference>
<dbReference type="GO" id="GO:0004032">
    <property type="term" value="F:aldose reductase (NADPH) activity"/>
    <property type="evidence" value="ECO:0000314"/>
    <property type="project" value="SGD"/>
</dbReference>
<dbReference type="GO" id="GO:0051268">
    <property type="term" value="F:alpha-keto amide reductase activity"/>
    <property type="evidence" value="ECO:0000314"/>
    <property type="project" value="SGD"/>
</dbReference>
<dbReference type="GO" id="GO:0051269">
    <property type="term" value="F:alpha-ketoester reductase (NADPH) activity"/>
    <property type="evidence" value="ECO:0000314"/>
    <property type="project" value="SGD"/>
</dbReference>
<dbReference type="GO" id="GO:0016652">
    <property type="term" value="F:oxidoreductase activity, acting on NAD(P)H as acceptor"/>
    <property type="evidence" value="ECO:0007669"/>
    <property type="project" value="InterPro"/>
</dbReference>
<dbReference type="GO" id="GO:0034599">
    <property type="term" value="P:cellular response to oxidative stress"/>
    <property type="evidence" value="ECO:0000316"/>
    <property type="project" value="SGD"/>
</dbReference>
<dbReference type="GO" id="GO:0042180">
    <property type="term" value="P:ketone metabolic process"/>
    <property type="evidence" value="ECO:0000314"/>
    <property type="project" value="SGD"/>
</dbReference>
<dbReference type="CDD" id="cd19120">
    <property type="entry name" value="AKR_AKR3C2-3"/>
    <property type="match status" value="1"/>
</dbReference>
<dbReference type="FunFam" id="3.20.20.100:FF:000044">
    <property type="entry name" value="Aldose reductase"/>
    <property type="match status" value="1"/>
</dbReference>
<dbReference type="Gene3D" id="3.20.20.100">
    <property type="entry name" value="NADP-dependent oxidoreductase domain"/>
    <property type="match status" value="1"/>
</dbReference>
<dbReference type="InterPro" id="IPR020471">
    <property type="entry name" value="AKR"/>
</dbReference>
<dbReference type="InterPro" id="IPR044494">
    <property type="entry name" value="AKR3C2/3"/>
</dbReference>
<dbReference type="InterPro" id="IPR018170">
    <property type="entry name" value="Aldo/ket_reductase_CS"/>
</dbReference>
<dbReference type="InterPro" id="IPR023210">
    <property type="entry name" value="NADP_OxRdtase_dom"/>
</dbReference>
<dbReference type="InterPro" id="IPR036812">
    <property type="entry name" value="NADP_OxRdtase_dom_sf"/>
</dbReference>
<dbReference type="PANTHER" id="PTHR43827">
    <property type="entry name" value="2,5-DIKETO-D-GLUCONIC ACID REDUCTASE"/>
    <property type="match status" value="1"/>
</dbReference>
<dbReference type="PANTHER" id="PTHR43827:SF3">
    <property type="entry name" value="NADP-DEPENDENT OXIDOREDUCTASE DOMAIN-CONTAINING PROTEIN"/>
    <property type="match status" value="1"/>
</dbReference>
<dbReference type="Pfam" id="PF00248">
    <property type="entry name" value="Aldo_ket_red"/>
    <property type="match status" value="1"/>
</dbReference>
<dbReference type="PIRSF" id="PIRSF000097">
    <property type="entry name" value="AKR"/>
    <property type="match status" value="1"/>
</dbReference>
<dbReference type="PRINTS" id="PR00069">
    <property type="entry name" value="ALDKETRDTASE"/>
</dbReference>
<dbReference type="SUPFAM" id="SSF51430">
    <property type="entry name" value="NAD(P)-linked oxidoreductase"/>
    <property type="match status" value="1"/>
</dbReference>
<dbReference type="PROSITE" id="PS00062">
    <property type="entry name" value="ALDOKETO_REDUCTASE_2"/>
    <property type="match status" value="1"/>
</dbReference>
<evidence type="ECO:0000250" key="1">
    <source>
        <dbReference type="UniProtKB" id="Q76L36"/>
    </source>
</evidence>
<evidence type="ECO:0000269" key="2">
    <source>
    </source>
</evidence>
<evidence type="ECO:0000269" key="3">
    <source>
    </source>
</evidence>
<evidence type="ECO:0000269" key="4">
    <source>
    </source>
</evidence>
<evidence type="ECO:0000269" key="5">
    <source>
    </source>
</evidence>
<evidence type="ECO:0000269" key="6">
    <source>
    </source>
</evidence>
<evidence type="ECO:0000305" key="7"/>
<evidence type="ECO:0007744" key="8">
    <source>
    </source>
</evidence>
<keyword id="KW-0963">Cytoplasm</keyword>
<keyword id="KW-0903">Direct protein sequencing</keyword>
<keyword id="KW-0521">NADP</keyword>
<keyword id="KW-0539">Nucleus</keyword>
<keyword id="KW-0560">Oxidoreductase</keyword>
<keyword id="KW-0597">Phosphoprotein</keyword>
<keyword id="KW-1185">Reference proteome</keyword>
<gene>
    <name type="ordered locus">YDL124W</name>
    <name type="ORF">D2240</name>
</gene>
<comment type="function">
    <text evidence="2">Reduces aromatic alpha-keto amides, aliphatic and aromatic alpha-keto esters, but not beta-keto esters.</text>
</comment>
<comment type="biophysicochemical properties">
    <kinetics>
        <KM evidence="6">146 uM for o-chlorobenzoylformamide</KM>
        <KM evidence="6">156 uM for m-chlorobenzoylformamide</KM>
        <KM evidence="6">231 uM for p-chlorobenzoylformamide</KM>
        <KM evidence="6">103 uM for benzoylformamide</KM>
        <KM evidence="6">254 uM for 3-methyl-2-oxobutanoate</KM>
    </kinetics>
    <phDependence>
        <text evidence="6">Stable from pH 6 to 9.5.</text>
    </phDependence>
    <temperatureDependence>
        <text evidence="6">Thermostable up to 40 degrees Celsius.</text>
    </temperatureDependence>
</comment>
<comment type="subunit">
    <text evidence="6">Monomer.</text>
</comment>
<comment type="subcellular location">
    <subcellularLocation>
        <location evidence="4">Cytoplasm</location>
    </subcellularLocation>
    <subcellularLocation>
        <location evidence="4">Nucleus</location>
    </subcellularLocation>
</comment>
<comment type="induction">
    <text evidence="3">Transiently induced shortly after the switch from aerobic to anaerobic growth (at protein level).</text>
</comment>
<comment type="PTM">
    <text>The N-terminus is blocked.</text>
</comment>
<comment type="miscellaneous">
    <text evidence="5">Present with 4030 molecules/cell in log phase SD medium.</text>
</comment>
<comment type="similarity">
    <text evidence="7">Belongs to the aldo/keto reductase family.</text>
</comment>
<feature type="chain" id="PRO_0000262755" description="NADPH-dependent alpha-keto amide reductase">
    <location>
        <begin position="1"/>
        <end position="312"/>
    </location>
</feature>
<feature type="active site" description="Proton donor" evidence="1">
    <location>
        <position position="64"/>
    </location>
</feature>
<feature type="active site" description="Proton donor" evidence="1">
    <location>
        <position position="122"/>
    </location>
</feature>
<feature type="binding site" evidence="1">
    <location>
        <position position="25"/>
    </location>
    <ligand>
        <name>NADPH</name>
        <dbReference type="ChEBI" id="CHEBI:57783"/>
    </ligand>
</feature>
<feature type="binding site" evidence="1">
    <location>
        <position position="26"/>
    </location>
    <ligand>
        <name>NADPH</name>
        <dbReference type="ChEBI" id="CHEBI:57783"/>
    </ligand>
</feature>
<feature type="binding site" evidence="1">
    <location>
        <position position="27"/>
    </location>
    <ligand>
        <name>NADPH</name>
        <dbReference type="ChEBI" id="CHEBI:57783"/>
    </ligand>
</feature>
<feature type="binding site" evidence="1">
    <location>
        <position position="59"/>
    </location>
    <ligand>
        <name>NADPH</name>
        <dbReference type="ChEBI" id="CHEBI:57783"/>
    </ligand>
</feature>
<feature type="binding site" evidence="1">
    <location>
        <position position="157"/>
    </location>
    <ligand>
        <name>NADPH</name>
        <dbReference type="ChEBI" id="CHEBI:57783"/>
    </ligand>
</feature>
<feature type="binding site" evidence="1">
    <location>
        <position position="179"/>
    </location>
    <ligand>
        <name>NADPH</name>
        <dbReference type="ChEBI" id="CHEBI:57783"/>
    </ligand>
</feature>
<feature type="binding site" evidence="1">
    <location>
        <position position="208"/>
    </location>
    <ligand>
        <name>NADPH</name>
        <dbReference type="ChEBI" id="CHEBI:57783"/>
    </ligand>
</feature>
<feature type="binding site" evidence="1">
    <location>
        <position position="210"/>
    </location>
    <ligand>
        <name>NADPH</name>
        <dbReference type="ChEBI" id="CHEBI:57783"/>
    </ligand>
</feature>
<feature type="binding site" evidence="1">
    <location>
        <position position="257"/>
    </location>
    <ligand>
        <name>NADPH</name>
        <dbReference type="ChEBI" id="CHEBI:57783"/>
    </ligand>
</feature>
<feature type="binding site" evidence="1">
    <location>
        <position position="258"/>
    </location>
    <ligand>
        <name>NADPH</name>
        <dbReference type="ChEBI" id="CHEBI:57783"/>
    </ligand>
</feature>
<feature type="binding site" evidence="1">
    <location>
        <position position="259"/>
    </location>
    <ligand>
        <name>NADPH</name>
        <dbReference type="ChEBI" id="CHEBI:57783"/>
    </ligand>
</feature>
<feature type="binding site" evidence="1">
    <location>
        <position position="260"/>
    </location>
    <ligand>
        <name>NADPH</name>
        <dbReference type="ChEBI" id="CHEBI:57783"/>
    </ligand>
</feature>
<feature type="binding site" evidence="1">
    <location>
        <position position="261"/>
    </location>
    <ligand>
        <name>NADPH</name>
        <dbReference type="ChEBI" id="CHEBI:57783"/>
    </ligand>
</feature>
<feature type="binding site" evidence="1">
    <location>
        <position position="264"/>
    </location>
    <ligand>
        <name>NADPH</name>
        <dbReference type="ChEBI" id="CHEBI:57783"/>
    </ligand>
</feature>
<feature type="site" description="Lowers pKa of active site Tyr" evidence="1">
    <location>
        <position position="89"/>
    </location>
</feature>
<feature type="modified residue" description="Phosphoserine" evidence="8">
    <location>
        <position position="123"/>
    </location>
</feature>
<protein>
    <recommendedName>
        <fullName>NADPH-dependent alpha-keto amide reductase</fullName>
        <shortName>AKR-E</shortName>
        <ecNumber>1.2.1.-</ecNumber>
    </recommendedName>
    <alternativeName>
        <fullName>YKAR</fullName>
    </alternativeName>
</protein>
<proteinExistence type="evidence at protein level"/>
<organism>
    <name type="scientific">Saccharomyces cerevisiae (strain ATCC 204508 / S288c)</name>
    <name type="common">Baker's yeast</name>
    <dbReference type="NCBI Taxonomy" id="559292"/>
    <lineage>
        <taxon>Eukaryota</taxon>
        <taxon>Fungi</taxon>
        <taxon>Dikarya</taxon>
        <taxon>Ascomycota</taxon>
        <taxon>Saccharomycotina</taxon>
        <taxon>Saccharomycetes</taxon>
        <taxon>Saccharomycetales</taxon>
        <taxon>Saccharomycetaceae</taxon>
        <taxon>Saccharomyces</taxon>
    </lineage>
</organism>
<accession>Q07551</accession>
<accession>D6VRM6</accession>
<reference key="1">
    <citation type="journal article" date="1997" name="Nature">
        <title>The nucleotide sequence of Saccharomyces cerevisiae chromosome IV.</title>
        <authorList>
            <person name="Jacq C."/>
            <person name="Alt-Moerbe J."/>
            <person name="Andre B."/>
            <person name="Arnold W."/>
            <person name="Bahr A."/>
            <person name="Ballesta J.P.G."/>
            <person name="Bargues M."/>
            <person name="Baron L."/>
            <person name="Becker A."/>
            <person name="Biteau N."/>
            <person name="Bloecker H."/>
            <person name="Blugeon C."/>
            <person name="Boskovic J."/>
            <person name="Brandt P."/>
            <person name="Brueckner M."/>
            <person name="Buitrago M.J."/>
            <person name="Coster F."/>
            <person name="Delaveau T."/>
            <person name="del Rey F."/>
            <person name="Dujon B."/>
            <person name="Eide L.G."/>
            <person name="Garcia-Cantalejo J.M."/>
            <person name="Goffeau A."/>
            <person name="Gomez-Peris A."/>
            <person name="Granotier C."/>
            <person name="Hanemann V."/>
            <person name="Hankeln T."/>
            <person name="Hoheisel J.D."/>
            <person name="Jaeger W."/>
            <person name="Jimenez A."/>
            <person name="Jonniaux J.-L."/>
            <person name="Kraemer C."/>
            <person name="Kuester H."/>
            <person name="Laamanen P."/>
            <person name="Legros Y."/>
            <person name="Louis E.J."/>
            <person name="Moeller-Rieker S."/>
            <person name="Monnet A."/>
            <person name="Moro M."/>
            <person name="Mueller-Auer S."/>
            <person name="Nussbaumer B."/>
            <person name="Paricio N."/>
            <person name="Paulin L."/>
            <person name="Perea J."/>
            <person name="Perez-Alonso M."/>
            <person name="Perez-Ortin J.E."/>
            <person name="Pohl T.M."/>
            <person name="Prydz H."/>
            <person name="Purnelle B."/>
            <person name="Rasmussen S.W."/>
            <person name="Remacha M.A."/>
            <person name="Revuelta J.L."/>
            <person name="Rieger M."/>
            <person name="Salom D."/>
            <person name="Saluz H.P."/>
            <person name="Saiz J.E."/>
            <person name="Saren A.-M."/>
            <person name="Schaefer M."/>
            <person name="Scharfe M."/>
            <person name="Schmidt E.R."/>
            <person name="Schneider C."/>
            <person name="Scholler P."/>
            <person name="Schwarz S."/>
            <person name="Soler-Mira A."/>
            <person name="Urrestarazu L.A."/>
            <person name="Verhasselt P."/>
            <person name="Vissers S."/>
            <person name="Voet M."/>
            <person name="Volckaert G."/>
            <person name="Wagner G."/>
            <person name="Wambutt R."/>
            <person name="Wedler E."/>
            <person name="Wedler H."/>
            <person name="Woelfl S."/>
            <person name="Harris D.E."/>
            <person name="Bowman S."/>
            <person name="Brown D."/>
            <person name="Churcher C.M."/>
            <person name="Connor R."/>
            <person name="Dedman K."/>
            <person name="Gentles S."/>
            <person name="Hamlin N."/>
            <person name="Hunt S."/>
            <person name="Jones L."/>
            <person name="McDonald S."/>
            <person name="Murphy L.D."/>
            <person name="Niblett D."/>
            <person name="Odell C."/>
            <person name="Oliver K."/>
            <person name="Rajandream M.A."/>
            <person name="Richards C."/>
            <person name="Shore L."/>
            <person name="Walsh S.V."/>
            <person name="Barrell B.G."/>
            <person name="Dietrich F.S."/>
            <person name="Mulligan J.T."/>
            <person name="Allen E."/>
            <person name="Araujo R."/>
            <person name="Aviles E."/>
            <person name="Berno A."/>
            <person name="Carpenter J."/>
            <person name="Chen E."/>
            <person name="Cherry J.M."/>
            <person name="Chung E."/>
            <person name="Duncan M."/>
            <person name="Hunicke-Smith S."/>
            <person name="Hyman R.W."/>
            <person name="Komp C."/>
            <person name="Lashkari D."/>
            <person name="Lew H."/>
            <person name="Lin D."/>
            <person name="Mosedale D."/>
            <person name="Nakahara K."/>
            <person name="Namath A."/>
            <person name="Oefner P."/>
            <person name="Oh C."/>
            <person name="Petel F.X."/>
            <person name="Roberts D."/>
            <person name="Schramm S."/>
            <person name="Schroeder M."/>
            <person name="Shogren T."/>
            <person name="Shroff N."/>
            <person name="Winant A."/>
            <person name="Yelton M.A."/>
            <person name="Botstein D."/>
            <person name="Davis R.W."/>
            <person name="Johnston M."/>
            <person name="Andrews S."/>
            <person name="Brinkman R."/>
            <person name="Cooper J."/>
            <person name="Ding H."/>
            <person name="Du Z."/>
            <person name="Favello A."/>
            <person name="Fulton L."/>
            <person name="Gattung S."/>
            <person name="Greco T."/>
            <person name="Hallsworth K."/>
            <person name="Hawkins J."/>
            <person name="Hillier L.W."/>
            <person name="Jier M."/>
            <person name="Johnson D."/>
            <person name="Johnston L."/>
            <person name="Kirsten J."/>
            <person name="Kucaba T."/>
            <person name="Langston Y."/>
            <person name="Latreille P."/>
            <person name="Le T."/>
            <person name="Mardis E."/>
            <person name="Menezes S."/>
            <person name="Miller N."/>
            <person name="Nhan M."/>
            <person name="Pauley A."/>
            <person name="Peluso D."/>
            <person name="Rifkin L."/>
            <person name="Riles L."/>
            <person name="Taich A."/>
            <person name="Trevaskis E."/>
            <person name="Vignati D."/>
            <person name="Wilcox L."/>
            <person name="Wohldman P."/>
            <person name="Vaudin M."/>
            <person name="Wilson R."/>
            <person name="Waterston R."/>
            <person name="Albermann K."/>
            <person name="Hani J."/>
            <person name="Heumann K."/>
            <person name="Kleine K."/>
            <person name="Mewes H.-W."/>
            <person name="Zollner A."/>
            <person name="Zaccaria P."/>
        </authorList>
    </citation>
    <scope>NUCLEOTIDE SEQUENCE [LARGE SCALE GENOMIC DNA]</scope>
    <source>
        <strain>ATCC 204508 / S288c</strain>
    </source>
</reference>
<reference key="2">
    <citation type="journal article" date="2014" name="G3 (Bethesda)">
        <title>The reference genome sequence of Saccharomyces cerevisiae: Then and now.</title>
        <authorList>
            <person name="Engel S.R."/>
            <person name="Dietrich F.S."/>
            <person name="Fisk D.G."/>
            <person name="Binkley G."/>
            <person name="Balakrishnan R."/>
            <person name="Costanzo M.C."/>
            <person name="Dwight S.S."/>
            <person name="Hitz B.C."/>
            <person name="Karra K."/>
            <person name="Nash R.S."/>
            <person name="Weng S."/>
            <person name="Wong E.D."/>
            <person name="Lloyd P."/>
            <person name="Skrzypek M.S."/>
            <person name="Miyasato S.R."/>
            <person name="Simison M."/>
            <person name="Cherry J.M."/>
        </authorList>
    </citation>
    <scope>GENOME REANNOTATION</scope>
    <source>
        <strain>ATCC 204508 / S288c</strain>
    </source>
</reference>
<reference key="3">
    <citation type="journal article" date="2004" name="Biosci. Biotechnol. Biochem.">
        <title>Purification and characterization of alpha-keto amide reductase from Saccharomyces cerevisiae.</title>
        <authorList>
            <person name="Ishihara K."/>
            <person name="Yamamoto H."/>
            <person name="Mitsuhashi K."/>
            <person name="Nishikawa K."/>
            <person name="Tsuboi S."/>
            <person name="Tsuji H."/>
            <person name="Nakajima N."/>
        </authorList>
    </citation>
    <scope>PROTEIN SEQUENCE OF 265-276</scope>
    <scope>BIOPHYSICOCHEMICAL PROPERTIES</scope>
    <scope>CHARACTERIZATION</scope>
    <scope>SUBUNIT</scope>
</reference>
<reference key="4">
    <citation type="journal article" date="2001" name="Chem. Biol. Interact.">
        <title>Functional genomic studies of aldo-keto reductases.</title>
        <authorList>
            <person name="Petrash J.M."/>
            <person name="Murthy B.S."/>
            <person name="Young M."/>
            <person name="Morris K."/>
            <person name="Rikimaru L."/>
            <person name="Griest T.A."/>
            <person name="Harter T."/>
        </authorList>
    </citation>
    <scope>FUNCTION</scope>
</reference>
<reference key="5">
    <citation type="journal article" date="2003" name="Nature">
        <title>Global analysis of protein localization in budding yeast.</title>
        <authorList>
            <person name="Huh W.-K."/>
            <person name="Falvo J.V."/>
            <person name="Gerke L.C."/>
            <person name="Carroll A.S."/>
            <person name="Howson R.W."/>
            <person name="Weissman J.S."/>
            <person name="O'Shea E.K."/>
        </authorList>
    </citation>
    <scope>SUBCELLULAR LOCATION [LARGE SCALE ANALYSIS]</scope>
</reference>
<reference key="6">
    <citation type="journal article" date="2003" name="Nature">
        <title>Global analysis of protein expression in yeast.</title>
        <authorList>
            <person name="Ghaemmaghami S."/>
            <person name="Huh W.-K."/>
            <person name="Bower K."/>
            <person name="Howson R.W."/>
            <person name="Belle A."/>
            <person name="Dephoure N."/>
            <person name="O'Shea E.K."/>
            <person name="Weissman J.S."/>
        </authorList>
    </citation>
    <scope>LEVEL OF PROTEIN EXPRESSION [LARGE SCALE ANALYSIS]</scope>
</reference>
<reference key="7">
    <citation type="journal article" date="2003" name="Yeast">
        <title>Proteome analysis of recombinant xylose-fermenting Saccharomyces cerevisiae.</title>
        <authorList>
            <person name="Salusjaervi L."/>
            <person name="Poutanen M."/>
            <person name="Pitkaenen J.-P."/>
            <person name="Koivistoinen H."/>
            <person name="Aristidou A."/>
            <person name="Kalkkinen N."/>
            <person name="Ruohonen L."/>
            <person name="Penttilae M."/>
        </authorList>
    </citation>
    <scope>IDENTIFICATION BY MASS SPECTROMETRY</scope>
    <scope>INDUCTION</scope>
</reference>
<reference key="8">
    <citation type="journal article" date="2007" name="J. Proteome Res.">
        <title>Large-scale phosphorylation analysis of alpha-factor-arrested Saccharomyces cerevisiae.</title>
        <authorList>
            <person name="Li X."/>
            <person name="Gerber S.A."/>
            <person name="Rudner A.D."/>
            <person name="Beausoleil S.A."/>
            <person name="Haas W."/>
            <person name="Villen J."/>
            <person name="Elias J.E."/>
            <person name="Gygi S.P."/>
        </authorList>
    </citation>
    <scope>IDENTIFICATION BY MASS SPECTROMETRY [LARGE SCALE ANALYSIS]</scope>
    <source>
        <strain>ADR376</strain>
    </source>
</reference>
<reference key="9">
    <citation type="journal article" date="2008" name="Mol. Cell. Proteomics">
        <title>A multidimensional chromatography technology for in-depth phosphoproteome analysis.</title>
        <authorList>
            <person name="Albuquerque C.P."/>
            <person name="Smolka M.B."/>
            <person name="Payne S.H."/>
            <person name="Bafna V."/>
            <person name="Eng J."/>
            <person name="Zhou H."/>
        </authorList>
    </citation>
    <scope>PHOSPHORYLATION [LARGE SCALE ANALYSIS] AT SER-123</scope>
    <scope>IDENTIFICATION BY MASS SPECTROMETRY [LARGE SCALE ANALYSIS]</scope>
</reference>
<name>KAR_YEAST</name>